<sequence>MAEAQTALWGLVEEFVVGEQDSKSAEVAAGVKDGVFTVLQVVESLGSCLANPEPRMRSKGVQLLSRVLLECYSRLTEKEVEVLVVFYENRLKDHHLITPHVLQGLMALSMCDVLPQGVAVSVLKSVFQEVHVQSLMQIDRHTVYMIITNFMKTREEELKNLGADFTYGFIQVMDGEKDPRNLLVAFYIVQDIVTKNYALGPFVEELFEVTSCYFPIDFTPPPSDPHGITREHLIMGLRAVLASTSRFAEFLLPLLIEKMDSEMQSAKLDSLQTLSACCTVYGQKELKEFLSGLWSSIRREVFQTASEKIEAEGLAALQALSACLSRSVLSPDAEDLLDSFLNNILQDCKHHLCEPDMKLVWPSAKLLQAAAGGSSRACWKVTANVLPLLLEQYNQHAQSSHRRTILEMTLGFLKLQSRWLDEEDENGLGNLKESLCSMVFSAVTDSSTQLHVVALKILTVLAMQQGFMASSDIDLVVDHLTRLILQKTDSESCMAAVEASGTLAKVHPSAFISRMLPQLCANLQTEPMDINLNESGVVPEHSIRQLCLEALAAVSTHQSILKETVPILLDYIRRAHNGEEETNVENVVSVCKSLHRVAVQCQLDSESLQFYHQTVLPCLLSLTVQAATQDSGTSSHILLRDDILTAMVPVISAACTHLKPELASKSTSQIVSLFLDGDISLLSENNFSSKFQPFQVNGPTELQNRLVSLLMAFICSLPRNVEIPHLRRLLQHLLSLSLSGCSLFAYSSASKCFAGLINKCPQGDLLDDILKVTAQRIDVGLVEEPSRTQAITLLVWVTKALVLRYHPLSGQLTDKMIGLLSDQQLGPSVANMFSLLVSDSPDILNKACHADIRIMFRQRFFTENVPKLVQGFNSANGDDKPNYLKALSHVLNTLPKQVLMPELPSLLSLLLEALSCPDKVVQLSTLICLEPLLQEAPETLKVHIDGLISKLLGLSCSPAMAVRITALKCILALTKLPLHMLLPYKQQVIRALAKPLDDKKRLVRKEAVETRCQWFLLGSPGS</sequence>
<organism>
    <name type="scientific">Xenopus laevis</name>
    <name type="common">African clawed frog</name>
    <dbReference type="NCBI Taxonomy" id="8355"/>
    <lineage>
        <taxon>Eukaryota</taxon>
        <taxon>Metazoa</taxon>
        <taxon>Chordata</taxon>
        <taxon>Craniata</taxon>
        <taxon>Vertebrata</taxon>
        <taxon>Euteleostomi</taxon>
        <taxon>Amphibia</taxon>
        <taxon>Batrachia</taxon>
        <taxon>Anura</taxon>
        <taxon>Pipoidea</taxon>
        <taxon>Pipidae</taxon>
        <taxon>Xenopodinae</taxon>
        <taxon>Xenopus</taxon>
        <taxon>Xenopus</taxon>
    </lineage>
</organism>
<feature type="chain" id="PRO_0000419482" description="MMS19 nucleotide excision repair protein homolog">
    <location>
        <begin position="1"/>
        <end position="1022"/>
    </location>
</feature>
<feature type="repeat" description="HEAT 1">
    <location>
        <begin position="858"/>
        <end position="896"/>
    </location>
</feature>
<feature type="repeat" description="HEAT 2">
    <location>
        <begin position="900"/>
        <end position="938"/>
    </location>
</feature>
<feature type="repeat" description="HEAT 3">
    <location>
        <begin position="941"/>
        <end position="979"/>
    </location>
</feature>
<feature type="repeat" description="HEAT 4">
    <location>
        <begin position="982"/>
        <end position="1020"/>
    </location>
</feature>
<dbReference type="EMBL" id="BC078095">
    <property type="protein sequence ID" value="AAH78095.1"/>
    <property type="molecule type" value="mRNA"/>
</dbReference>
<dbReference type="RefSeq" id="NP_001087156.1">
    <property type="nucleotide sequence ID" value="NM_001093687.1"/>
</dbReference>
<dbReference type="SMR" id="Q6DCF2"/>
<dbReference type="DNASU" id="447045"/>
<dbReference type="AGR" id="Xenbase:XB-GENE-979263"/>
<dbReference type="Xenbase" id="XB-GENE-979263">
    <property type="gene designation" value="mms19.L"/>
</dbReference>
<dbReference type="OrthoDB" id="342900at2759"/>
<dbReference type="Proteomes" id="UP000186698">
    <property type="component" value="Unplaced"/>
</dbReference>
<dbReference type="Bgee" id="447045">
    <property type="expression patterns" value="Expressed in ovary and 19 other cell types or tissues"/>
</dbReference>
<dbReference type="GO" id="GO:0005737">
    <property type="term" value="C:cytoplasm"/>
    <property type="evidence" value="ECO:0000250"/>
    <property type="project" value="UniProtKB"/>
</dbReference>
<dbReference type="GO" id="GO:0097361">
    <property type="term" value="C:cytosolic [4Fe-4S] assembly targeting complex"/>
    <property type="evidence" value="ECO:0000250"/>
    <property type="project" value="UniProtKB"/>
</dbReference>
<dbReference type="GO" id="GO:0071817">
    <property type="term" value="C:MMXD complex"/>
    <property type="evidence" value="ECO:0000318"/>
    <property type="project" value="GO_Central"/>
</dbReference>
<dbReference type="GO" id="GO:0005634">
    <property type="term" value="C:nucleus"/>
    <property type="evidence" value="ECO:0007669"/>
    <property type="project" value="UniProtKB-SubCell"/>
</dbReference>
<dbReference type="GO" id="GO:0006281">
    <property type="term" value="P:DNA repair"/>
    <property type="evidence" value="ECO:0007669"/>
    <property type="project" value="UniProtKB-KW"/>
</dbReference>
<dbReference type="GO" id="GO:0051604">
    <property type="term" value="P:protein maturation"/>
    <property type="evidence" value="ECO:0000250"/>
    <property type="project" value="UniProtKB"/>
</dbReference>
<dbReference type="FunFam" id="1.25.10.10:FF:001188">
    <property type="entry name" value="MMS19 nucleotide excision repair protein homolog"/>
    <property type="match status" value="1"/>
</dbReference>
<dbReference type="FunFam" id="1.25.10.10:FF:000114">
    <property type="entry name" value="MMS19 nucleotide excision repair protein homolog isoform X2"/>
    <property type="match status" value="1"/>
</dbReference>
<dbReference type="Gene3D" id="1.25.10.10">
    <property type="entry name" value="Leucine-rich Repeat Variant"/>
    <property type="match status" value="3"/>
</dbReference>
<dbReference type="InterPro" id="IPR011989">
    <property type="entry name" value="ARM-like"/>
</dbReference>
<dbReference type="InterPro" id="IPR016024">
    <property type="entry name" value="ARM-type_fold"/>
</dbReference>
<dbReference type="InterPro" id="IPR039920">
    <property type="entry name" value="MMS19"/>
</dbReference>
<dbReference type="InterPro" id="IPR024687">
    <property type="entry name" value="MMS19_C"/>
</dbReference>
<dbReference type="InterPro" id="IPR029240">
    <property type="entry name" value="MMS19_N"/>
</dbReference>
<dbReference type="PANTHER" id="PTHR12891">
    <property type="entry name" value="DNA REPAIR/TRANSCRIPTION PROTEIN MET18/MMS19"/>
    <property type="match status" value="1"/>
</dbReference>
<dbReference type="PANTHER" id="PTHR12891:SF0">
    <property type="entry name" value="MMS19 NUCLEOTIDE EXCISION REPAIR PROTEIN HOMOLOG"/>
    <property type="match status" value="1"/>
</dbReference>
<dbReference type="Pfam" id="PF12460">
    <property type="entry name" value="MMS19_C"/>
    <property type="match status" value="1"/>
</dbReference>
<dbReference type="Pfam" id="PF14500">
    <property type="entry name" value="MMS19_N"/>
    <property type="match status" value="1"/>
</dbReference>
<dbReference type="SUPFAM" id="SSF48371">
    <property type="entry name" value="ARM repeat"/>
    <property type="match status" value="2"/>
</dbReference>
<comment type="function">
    <text evidence="1">Key component of the cytosolic iron-sulfur protein assembly (CIA) complex, a multiprotein complex that mediates the incorporation of iron-sulfur cluster into apoproteins specifically involved in DNA metabolism and genomic integrity. In the CIA complex, MMS19 acts as an adapter between early-acting CIA components and a subset of cellular target iron-sulfur proteins (By similarity).</text>
</comment>
<comment type="subunit">
    <text evidence="1">Component of the CIA complex.</text>
</comment>
<comment type="subcellular location">
    <subcellularLocation>
        <location evidence="1">Nucleus</location>
    </subcellularLocation>
    <subcellularLocation>
        <location evidence="1">Cytoplasm</location>
        <location evidence="1">Cytoskeleton</location>
        <location evidence="1">Spindle</location>
    </subcellularLocation>
</comment>
<comment type="similarity">
    <text evidence="2">Belongs to the MET18/MMS19 family.</text>
</comment>
<reference key="1">
    <citation type="submission" date="2004-07" db="EMBL/GenBank/DDBJ databases">
        <authorList>
            <consortium name="NIH - Xenopus Gene Collection (XGC) project"/>
        </authorList>
    </citation>
    <scope>NUCLEOTIDE SEQUENCE [LARGE SCALE MRNA]</scope>
    <source>
        <tissue>Embryo</tissue>
    </source>
</reference>
<keyword id="KW-0963">Cytoplasm</keyword>
<keyword id="KW-0206">Cytoskeleton</keyword>
<keyword id="KW-0227">DNA damage</keyword>
<keyword id="KW-0234">DNA repair</keyword>
<keyword id="KW-0539">Nucleus</keyword>
<keyword id="KW-1185">Reference proteome</keyword>
<keyword id="KW-0677">Repeat</keyword>
<protein>
    <recommendedName>
        <fullName>MMS19 nucleotide excision repair protein homolog</fullName>
    </recommendedName>
    <alternativeName>
        <fullName>MMS19-like protein</fullName>
    </alternativeName>
</protein>
<accession>Q6DCF2</accession>
<evidence type="ECO:0000250" key="1">
    <source>
        <dbReference type="UniProtKB" id="Q96T76"/>
    </source>
</evidence>
<evidence type="ECO:0000305" key="2"/>
<name>MMS19_XENLA</name>
<gene>
    <name type="primary">mms19</name>
</gene>
<proteinExistence type="evidence at transcript level"/>